<evidence type="ECO:0000250" key="1">
    <source>
        <dbReference type="UniProtKB" id="Q8W475"/>
    </source>
</evidence>
<evidence type="ECO:0000255" key="2">
    <source>
        <dbReference type="PROSITE-ProRule" id="PRU00247"/>
    </source>
</evidence>
<evidence type="ECO:0000255" key="3">
    <source>
        <dbReference type="PROSITE-ProRule" id="PRU00624"/>
    </source>
</evidence>
<evidence type="ECO:0000256" key="4">
    <source>
        <dbReference type="SAM" id="MobiDB-lite"/>
    </source>
</evidence>
<evidence type="ECO:0000269" key="5">
    <source>
    </source>
</evidence>
<evidence type="ECO:0000303" key="6">
    <source>
    </source>
</evidence>
<evidence type="ECO:0000305" key="7"/>
<evidence type="ECO:0000312" key="8">
    <source>
        <dbReference type="EMBL" id="BAS89730.1"/>
    </source>
</evidence>
<evidence type="ECO:0000312" key="9">
    <source>
        <dbReference type="EMBL" id="CAE05892.1"/>
    </source>
</evidence>
<name>SWI3A_ORYSJ</name>
<proteinExistence type="evidence at protein level"/>
<organism>
    <name type="scientific">Oryza sativa subsp. japonica</name>
    <name type="common">Rice</name>
    <dbReference type="NCBI Taxonomy" id="39947"/>
    <lineage>
        <taxon>Eukaryota</taxon>
        <taxon>Viridiplantae</taxon>
        <taxon>Streptophyta</taxon>
        <taxon>Embryophyta</taxon>
        <taxon>Tracheophyta</taxon>
        <taxon>Spermatophyta</taxon>
        <taxon>Magnoliopsida</taxon>
        <taxon>Liliopsida</taxon>
        <taxon>Poales</taxon>
        <taxon>Poaceae</taxon>
        <taxon>BOP clade</taxon>
        <taxon>Oryzoideae</taxon>
        <taxon>Oryzeae</taxon>
        <taxon>Oryzinae</taxon>
        <taxon>Oryza</taxon>
        <taxon>Oryza sativa</taxon>
    </lineage>
</organism>
<dbReference type="EMBL" id="AL606595">
    <property type="protein sequence ID" value="CAE05892.1"/>
    <property type="status" value="ALT_SEQ"/>
    <property type="molecule type" value="Genomic_DNA"/>
</dbReference>
<dbReference type="EMBL" id="AP008210">
    <property type="protein sequence ID" value="BAF15014.1"/>
    <property type="molecule type" value="Genomic_DNA"/>
</dbReference>
<dbReference type="EMBL" id="AP014960">
    <property type="protein sequence ID" value="BAS89730.1"/>
    <property type="molecule type" value="Genomic_DNA"/>
</dbReference>
<dbReference type="EMBL" id="AK102453">
    <property type="protein sequence ID" value="BAG95562.1"/>
    <property type="molecule type" value="mRNA"/>
</dbReference>
<dbReference type="SMR" id="Q0JCC3"/>
<dbReference type="FunCoup" id="Q0JCC3">
    <property type="interactions" value="374"/>
</dbReference>
<dbReference type="STRING" id="39947.Q0JCC3"/>
<dbReference type="PaxDb" id="39947-Q0JCC3"/>
<dbReference type="EnsemblPlants" id="Os04t0480300-01">
    <property type="protein sequence ID" value="Os04t0480300-01"/>
    <property type="gene ID" value="Os04g0480300"/>
</dbReference>
<dbReference type="Gramene" id="Os04t0480300-01">
    <property type="protein sequence ID" value="Os04t0480300-01"/>
    <property type="gene ID" value="Os04g0480300"/>
</dbReference>
<dbReference type="KEGG" id="dosa:Os04g0480300"/>
<dbReference type="eggNOG" id="KOG1279">
    <property type="taxonomic scope" value="Eukaryota"/>
</dbReference>
<dbReference type="HOGENOM" id="CLU_004447_5_1_1"/>
<dbReference type="InParanoid" id="Q0JCC3"/>
<dbReference type="OMA" id="MFISTTY"/>
<dbReference type="Proteomes" id="UP000000763">
    <property type="component" value="Chromosome 4"/>
</dbReference>
<dbReference type="Proteomes" id="UP000059680">
    <property type="component" value="Chromosome 4"/>
</dbReference>
<dbReference type="GO" id="GO:0005634">
    <property type="term" value="C:nucleus"/>
    <property type="evidence" value="ECO:0000314"/>
    <property type="project" value="UniProtKB"/>
</dbReference>
<dbReference type="GO" id="GO:0003677">
    <property type="term" value="F:DNA binding"/>
    <property type="evidence" value="ECO:0007669"/>
    <property type="project" value="UniProtKB-KW"/>
</dbReference>
<dbReference type="GO" id="GO:0006325">
    <property type="term" value="P:chromatin organization"/>
    <property type="evidence" value="ECO:0007669"/>
    <property type="project" value="UniProtKB-KW"/>
</dbReference>
<dbReference type="CDD" id="cd00167">
    <property type="entry name" value="SANT"/>
    <property type="match status" value="1"/>
</dbReference>
<dbReference type="FunFam" id="1.10.10.10:FF:000020">
    <property type="entry name" value="SWI/SNF complex subunit SMARCC2 isoform c"/>
    <property type="match status" value="1"/>
</dbReference>
<dbReference type="Gene3D" id="1.10.10.60">
    <property type="entry name" value="Homeodomain-like"/>
    <property type="match status" value="1"/>
</dbReference>
<dbReference type="Gene3D" id="1.10.10.10">
    <property type="entry name" value="Winged helix-like DNA-binding domain superfamily/Winged helix DNA-binding domain"/>
    <property type="match status" value="1"/>
</dbReference>
<dbReference type="InterPro" id="IPR009057">
    <property type="entry name" value="Homeodomain-like_sf"/>
</dbReference>
<dbReference type="InterPro" id="IPR001005">
    <property type="entry name" value="SANT/Myb"/>
</dbReference>
<dbReference type="InterPro" id="IPR017884">
    <property type="entry name" value="SANT_dom"/>
</dbReference>
<dbReference type="InterPro" id="IPR032451">
    <property type="entry name" value="SMARCC_C"/>
</dbReference>
<dbReference type="InterPro" id="IPR007526">
    <property type="entry name" value="SWIRM"/>
</dbReference>
<dbReference type="InterPro" id="IPR036388">
    <property type="entry name" value="WH-like_DNA-bd_sf"/>
</dbReference>
<dbReference type="PANTHER" id="PTHR12802">
    <property type="entry name" value="SWI/SNF COMPLEX-RELATED"/>
    <property type="match status" value="1"/>
</dbReference>
<dbReference type="PANTHER" id="PTHR12802:SF140">
    <property type="entry name" value="SWI_SNF COMPLEX SUBUNIT SWI3A"/>
    <property type="match status" value="1"/>
</dbReference>
<dbReference type="Pfam" id="PF00249">
    <property type="entry name" value="Myb_DNA-binding"/>
    <property type="match status" value="1"/>
</dbReference>
<dbReference type="Pfam" id="PF04433">
    <property type="entry name" value="SWIRM"/>
    <property type="match status" value="1"/>
</dbReference>
<dbReference type="Pfam" id="PF16495">
    <property type="entry name" value="SWIRM-assoc_1"/>
    <property type="match status" value="1"/>
</dbReference>
<dbReference type="SMART" id="SM00717">
    <property type="entry name" value="SANT"/>
    <property type="match status" value="1"/>
</dbReference>
<dbReference type="SUPFAM" id="SSF46689">
    <property type="entry name" value="Homeodomain-like"/>
    <property type="match status" value="2"/>
</dbReference>
<dbReference type="PROSITE" id="PS51293">
    <property type="entry name" value="SANT"/>
    <property type="match status" value="1"/>
</dbReference>
<dbReference type="PROSITE" id="PS50934">
    <property type="entry name" value="SWIRM"/>
    <property type="match status" value="1"/>
</dbReference>
<gene>
    <name evidence="6" type="primary">SWI3A</name>
    <name evidence="7" type="synonym">CHB703</name>
    <name evidence="8" type="ordered locus">Os04g0480300</name>
    <name evidence="7" type="ordered locus">LOC_Os04g40420</name>
    <name evidence="9" type="ORF">OSJNBa0044K18.33</name>
</gene>
<reference key="1">
    <citation type="journal article" date="2002" name="Nature">
        <title>Sequence and analysis of rice chromosome 4.</title>
        <authorList>
            <person name="Feng Q."/>
            <person name="Zhang Y."/>
            <person name="Hao P."/>
            <person name="Wang S."/>
            <person name="Fu G."/>
            <person name="Huang Y."/>
            <person name="Li Y."/>
            <person name="Zhu J."/>
            <person name="Liu Y."/>
            <person name="Hu X."/>
            <person name="Jia P."/>
            <person name="Zhang Y."/>
            <person name="Zhao Q."/>
            <person name="Ying K."/>
            <person name="Yu S."/>
            <person name="Tang Y."/>
            <person name="Weng Q."/>
            <person name="Zhang L."/>
            <person name="Lu Y."/>
            <person name="Mu J."/>
            <person name="Lu Y."/>
            <person name="Zhang L.S."/>
            <person name="Yu Z."/>
            <person name="Fan D."/>
            <person name="Liu X."/>
            <person name="Lu T."/>
            <person name="Li C."/>
            <person name="Wu Y."/>
            <person name="Sun T."/>
            <person name="Lei H."/>
            <person name="Li T."/>
            <person name="Hu H."/>
            <person name="Guan J."/>
            <person name="Wu M."/>
            <person name="Zhang R."/>
            <person name="Zhou B."/>
            <person name="Chen Z."/>
            <person name="Chen L."/>
            <person name="Jin Z."/>
            <person name="Wang R."/>
            <person name="Yin H."/>
            <person name="Cai Z."/>
            <person name="Ren S."/>
            <person name="Lv G."/>
            <person name="Gu W."/>
            <person name="Zhu G."/>
            <person name="Tu Y."/>
            <person name="Jia J."/>
            <person name="Zhang Y."/>
            <person name="Chen J."/>
            <person name="Kang H."/>
            <person name="Chen X."/>
            <person name="Shao C."/>
            <person name="Sun Y."/>
            <person name="Hu Q."/>
            <person name="Zhang X."/>
            <person name="Zhang W."/>
            <person name="Wang L."/>
            <person name="Ding C."/>
            <person name="Sheng H."/>
            <person name="Gu J."/>
            <person name="Chen S."/>
            <person name="Ni L."/>
            <person name="Zhu F."/>
            <person name="Chen W."/>
            <person name="Lan L."/>
            <person name="Lai Y."/>
            <person name="Cheng Z."/>
            <person name="Gu M."/>
            <person name="Jiang J."/>
            <person name="Li J."/>
            <person name="Hong G."/>
            <person name="Xue Y."/>
            <person name="Han B."/>
        </authorList>
    </citation>
    <scope>NUCLEOTIDE SEQUENCE [LARGE SCALE GENOMIC DNA]</scope>
    <source>
        <strain>cv. Nipponbare</strain>
    </source>
</reference>
<reference key="2">
    <citation type="journal article" date="2005" name="Nature">
        <title>The map-based sequence of the rice genome.</title>
        <authorList>
            <consortium name="International rice genome sequencing project (IRGSP)"/>
        </authorList>
    </citation>
    <scope>NUCLEOTIDE SEQUENCE [LARGE SCALE GENOMIC DNA]</scope>
    <source>
        <strain>cv. Nipponbare</strain>
    </source>
</reference>
<reference key="3">
    <citation type="journal article" date="2008" name="Nucleic Acids Res.">
        <title>The rice annotation project database (RAP-DB): 2008 update.</title>
        <authorList>
            <consortium name="The rice annotation project (RAP)"/>
        </authorList>
    </citation>
    <scope>GENOME REANNOTATION</scope>
    <source>
        <strain>cv. Nipponbare</strain>
    </source>
</reference>
<reference key="4">
    <citation type="journal article" date="2013" name="Rice">
        <title>Improvement of the Oryza sativa Nipponbare reference genome using next generation sequence and optical map data.</title>
        <authorList>
            <person name="Kawahara Y."/>
            <person name="de la Bastide M."/>
            <person name="Hamilton J.P."/>
            <person name="Kanamori H."/>
            <person name="McCombie W.R."/>
            <person name="Ouyang S."/>
            <person name="Schwartz D.C."/>
            <person name="Tanaka T."/>
            <person name="Wu J."/>
            <person name="Zhou S."/>
            <person name="Childs K.L."/>
            <person name="Davidson R.M."/>
            <person name="Lin H."/>
            <person name="Quesada-Ocampo L."/>
            <person name="Vaillancourt B."/>
            <person name="Sakai H."/>
            <person name="Lee S.S."/>
            <person name="Kim J."/>
            <person name="Numa H."/>
            <person name="Itoh T."/>
            <person name="Buell C.R."/>
            <person name="Matsumoto T."/>
        </authorList>
    </citation>
    <scope>GENOME REANNOTATION</scope>
    <source>
        <strain>cv. Nipponbare</strain>
    </source>
</reference>
<reference key="5">
    <citation type="journal article" date="2003" name="Science">
        <title>Collection, mapping, and annotation of over 28,000 cDNA clones from japonica rice.</title>
        <authorList>
            <consortium name="The rice full-length cDNA consortium"/>
        </authorList>
    </citation>
    <scope>NUCLEOTIDE SEQUENCE [LARGE SCALE MRNA]</scope>
    <source>
        <strain>cv. Nipponbare</strain>
    </source>
</reference>
<reference key="6">
    <citation type="journal article" date="2020" name="Plant J.">
        <title>OsLFR is essential for early endosperm and embryo development by interacting with SWI/SNF complex members in Oryza sativa.</title>
        <authorList>
            <person name="Qi D."/>
            <person name="Wen Q."/>
            <person name="Meng Z."/>
            <person name="Yuan S."/>
            <person name="Guo H."/>
            <person name="Zhao H."/>
            <person name="Cui S."/>
        </authorList>
    </citation>
    <scope>INTERACTION WITH LFR</scope>
    <scope>SUBCELLULAR LOCATION</scope>
</reference>
<protein>
    <recommendedName>
        <fullName evidence="7">SWI/SNF complex subunit SWI3A homolog</fullName>
        <shortName evidence="6">OsSWI3A</shortName>
    </recommendedName>
    <alternativeName>
        <fullName evidence="7">Transcription regulatory protein SWI3A homolog</fullName>
    </alternativeName>
</protein>
<keyword id="KW-0156">Chromatin regulator</keyword>
<keyword id="KW-0238">DNA-binding</keyword>
<keyword id="KW-0539">Nucleus</keyword>
<keyword id="KW-1185">Reference proteome</keyword>
<keyword id="KW-0804">Transcription</keyword>
<keyword id="KW-0805">Transcription regulation</keyword>
<feature type="chain" id="PRO_0000452396" description="SWI/SNF complex subunit SWI3A homolog">
    <location>
        <begin position="1"/>
        <end position="560"/>
    </location>
</feature>
<feature type="domain" description="SWIRM" evidence="2">
    <location>
        <begin position="24"/>
        <end position="127"/>
    </location>
</feature>
<feature type="domain" description="SANT" evidence="3">
    <location>
        <begin position="242"/>
        <end position="293"/>
    </location>
</feature>
<feature type="region of interest" description="Disordered" evidence="4">
    <location>
        <begin position="1"/>
        <end position="22"/>
    </location>
</feature>
<feature type="region of interest" description="Disordered" evidence="4">
    <location>
        <begin position="311"/>
        <end position="352"/>
    </location>
</feature>
<feature type="region of interest" description="Disordered" evidence="4">
    <location>
        <begin position="414"/>
        <end position="445"/>
    </location>
</feature>
<feature type="compositionally biased region" description="Low complexity" evidence="4">
    <location>
        <begin position="1"/>
        <end position="13"/>
    </location>
</feature>
<feature type="compositionally biased region" description="Polar residues" evidence="4">
    <location>
        <begin position="311"/>
        <end position="330"/>
    </location>
</feature>
<feature type="compositionally biased region" description="Acidic residues" evidence="4">
    <location>
        <begin position="331"/>
        <end position="342"/>
    </location>
</feature>
<feature type="compositionally biased region" description="Basic and acidic residues" evidence="4">
    <location>
        <begin position="343"/>
        <end position="352"/>
    </location>
</feature>
<feature type="compositionally biased region" description="Basic and acidic residues" evidence="4">
    <location>
        <begin position="424"/>
        <end position="445"/>
    </location>
</feature>
<accession>Q0JCC3</accession>
<accession>A0A0P0WBS3</accession>
<accession>Q7XK11</accession>
<sequence>MSPPVAGAASSGDGPPGRPPRELYTIPASSGWFQWDEIHETERRALPEFFGGAGGSGFGTASRNPRIYREYRDYIISRYREDTSRRLTFTEVRKALVGDVTLLRKLFAFLDSSGLINFSASPSRPEAQQQQRQTEAEAVVEAPVGLQVTPRPPPSYFAEEKGGGGNENGFRLPPLTSYSDVFGEWAPGMAPICGLCGMECRDGNAQILKDGFKVCSKCYANNDNKGEANIHPGDKKERIDNHSSSAWTDAETLLLLEGVLKHGDDWDLIAQHVRTKNKSECIARLIQLPFGEHMLGTVNGKLDNRLHKIQTTDGKVNKSTVKESSSQPTETVDDMQIDGNEDGADKSVEEHPTKHRRLFSSIDITVSLMEQLAHLTTSTSPDVVAAAADAAIKALGNENPQARRAFQLSEKEYQTRAFSSNHARQSDDVGGGDRDVEMHGHPDKKQGKMFISTTYQVRAAVATSIGVAAARAKMLADQEEREMELLMASIIETQLKKIQYKIKHFEELELIMDQEYATLQQMKSSLVDEWQKVLKRAFETGVPISRDEVLIKLFQNKPNL</sequence>
<comment type="function">
    <text evidence="1">Component of a multiprotein complex equivalent of the SWI/SNF complex, an ATP-dependent chromatin-remodeling complex, which is required for the positive and negative regulation of gene expression of a large number of genes. It changes chromatin structure by altering DNA-histone contacts within a nucleosome, leading eventually to a change in nucleosome position, thus facilitating or repressing binding of gene-specific transcription factors.</text>
</comment>
<comment type="subunit">
    <text evidence="5">Interacts with LFR.</text>
</comment>
<comment type="subcellular location">
    <subcellularLocation>
        <location evidence="3 5">Nucleus</location>
    </subcellularLocation>
</comment>
<comment type="sequence caution" evidence="7">
    <conflict type="erroneous gene model prediction">
        <sequence resource="EMBL-CDS" id="CAE05892"/>
    </conflict>
</comment>